<proteinExistence type="inferred from homology"/>
<keyword id="KW-0030">Aminoacyl-tRNA synthetase</keyword>
<keyword id="KW-0067">ATP-binding</keyword>
<keyword id="KW-0963">Cytoplasm</keyword>
<keyword id="KW-0436">Ligase</keyword>
<keyword id="KW-0547">Nucleotide-binding</keyword>
<keyword id="KW-0648">Protein biosynthesis</keyword>
<dbReference type="EC" id="6.1.1.4" evidence="1"/>
<dbReference type="EMBL" id="CP000487">
    <property type="protein sequence ID" value="ABK82789.1"/>
    <property type="molecule type" value="Genomic_DNA"/>
</dbReference>
<dbReference type="RefSeq" id="WP_002849157.1">
    <property type="nucleotide sequence ID" value="NC_008599.1"/>
</dbReference>
<dbReference type="SMR" id="A0RNX3"/>
<dbReference type="GeneID" id="61064571"/>
<dbReference type="KEGG" id="cff:CFF8240_0731"/>
<dbReference type="eggNOG" id="COG0495">
    <property type="taxonomic scope" value="Bacteria"/>
</dbReference>
<dbReference type="HOGENOM" id="CLU_004427_0_0_7"/>
<dbReference type="Proteomes" id="UP000000760">
    <property type="component" value="Chromosome"/>
</dbReference>
<dbReference type="GO" id="GO:0005829">
    <property type="term" value="C:cytosol"/>
    <property type="evidence" value="ECO:0007669"/>
    <property type="project" value="TreeGrafter"/>
</dbReference>
<dbReference type="GO" id="GO:0002161">
    <property type="term" value="F:aminoacyl-tRNA deacylase activity"/>
    <property type="evidence" value="ECO:0007669"/>
    <property type="project" value="InterPro"/>
</dbReference>
<dbReference type="GO" id="GO:0005524">
    <property type="term" value="F:ATP binding"/>
    <property type="evidence" value="ECO:0007669"/>
    <property type="project" value="UniProtKB-UniRule"/>
</dbReference>
<dbReference type="GO" id="GO:0004823">
    <property type="term" value="F:leucine-tRNA ligase activity"/>
    <property type="evidence" value="ECO:0007669"/>
    <property type="project" value="UniProtKB-UniRule"/>
</dbReference>
<dbReference type="GO" id="GO:0006429">
    <property type="term" value="P:leucyl-tRNA aminoacylation"/>
    <property type="evidence" value="ECO:0007669"/>
    <property type="project" value="UniProtKB-UniRule"/>
</dbReference>
<dbReference type="CDD" id="cd07958">
    <property type="entry name" value="Anticodon_Ia_Leu_BEm"/>
    <property type="match status" value="1"/>
</dbReference>
<dbReference type="CDD" id="cd00812">
    <property type="entry name" value="LeuRS_core"/>
    <property type="match status" value="1"/>
</dbReference>
<dbReference type="FunFam" id="1.10.730.10:FF:000002">
    <property type="entry name" value="Leucine--tRNA ligase"/>
    <property type="match status" value="1"/>
</dbReference>
<dbReference type="FunFam" id="3.40.50.620:FF:000003">
    <property type="entry name" value="Leucine--tRNA ligase"/>
    <property type="match status" value="1"/>
</dbReference>
<dbReference type="Gene3D" id="3.10.20.590">
    <property type="match status" value="1"/>
</dbReference>
<dbReference type="Gene3D" id="3.40.50.620">
    <property type="entry name" value="HUPs"/>
    <property type="match status" value="2"/>
</dbReference>
<dbReference type="Gene3D" id="1.10.730.10">
    <property type="entry name" value="Isoleucyl-tRNA Synthetase, Domain 1"/>
    <property type="match status" value="2"/>
</dbReference>
<dbReference type="HAMAP" id="MF_00049_B">
    <property type="entry name" value="Leu_tRNA_synth_B"/>
    <property type="match status" value="1"/>
</dbReference>
<dbReference type="InterPro" id="IPR001412">
    <property type="entry name" value="aa-tRNA-synth_I_CS"/>
</dbReference>
<dbReference type="InterPro" id="IPR002302">
    <property type="entry name" value="Leu-tRNA-ligase"/>
</dbReference>
<dbReference type="InterPro" id="IPR025709">
    <property type="entry name" value="Leu_tRNA-synth_edit"/>
</dbReference>
<dbReference type="InterPro" id="IPR015413">
    <property type="entry name" value="Methionyl/Leucyl_tRNA_Synth"/>
</dbReference>
<dbReference type="InterPro" id="IPR014729">
    <property type="entry name" value="Rossmann-like_a/b/a_fold"/>
</dbReference>
<dbReference type="InterPro" id="IPR009080">
    <property type="entry name" value="tRNAsynth_Ia_anticodon-bd"/>
</dbReference>
<dbReference type="InterPro" id="IPR009008">
    <property type="entry name" value="Val/Leu/Ile-tRNA-synth_edit"/>
</dbReference>
<dbReference type="NCBIfam" id="TIGR00396">
    <property type="entry name" value="leuS_bact"/>
    <property type="match status" value="1"/>
</dbReference>
<dbReference type="PANTHER" id="PTHR43740:SF2">
    <property type="entry name" value="LEUCINE--TRNA LIGASE, MITOCHONDRIAL"/>
    <property type="match status" value="1"/>
</dbReference>
<dbReference type="PANTHER" id="PTHR43740">
    <property type="entry name" value="LEUCYL-TRNA SYNTHETASE"/>
    <property type="match status" value="1"/>
</dbReference>
<dbReference type="Pfam" id="PF13603">
    <property type="entry name" value="tRNA-synt_1_2"/>
    <property type="match status" value="1"/>
</dbReference>
<dbReference type="Pfam" id="PF09334">
    <property type="entry name" value="tRNA-synt_1g"/>
    <property type="match status" value="2"/>
</dbReference>
<dbReference type="PRINTS" id="PR00985">
    <property type="entry name" value="TRNASYNTHLEU"/>
</dbReference>
<dbReference type="SUPFAM" id="SSF47323">
    <property type="entry name" value="Anticodon-binding domain of a subclass of class I aminoacyl-tRNA synthetases"/>
    <property type="match status" value="1"/>
</dbReference>
<dbReference type="SUPFAM" id="SSF52374">
    <property type="entry name" value="Nucleotidylyl transferase"/>
    <property type="match status" value="1"/>
</dbReference>
<dbReference type="SUPFAM" id="SSF50677">
    <property type="entry name" value="ValRS/IleRS/LeuRS editing domain"/>
    <property type="match status" value="1"/>
</dbReference>
<dbReference type="PROSITE" id="PS00178">
    <property type="entry name" value="AA_TRNA_LIGASE_I"/>
    <property type="match status" value="1"/>
</dbReference>
<reference key="1">
    <citation type="submission" date="2006-11" db="EMBL/GenBank/DDBJ databases">
        <title>Sequence of Campylobacter fetus subsp. fetus 82-40.</title>
        <authorList>
            <person name="Fouts D.E."/>
            <person name="Nelson K.E."/>
        </authorList>
    </citation>
    <scope>NUCLEOTIDE SEQUENCE [LARGE SCALE GENOMIC DNA]</scope>
    <source>
        <strain>82-40</strain>
    </source>
</reference>
<feature type="chain" id="PRO_1000009316" description="Leucine--tRNA ligase">
    <location>
        <begin position="1"/>
        <end position="811"/>
    </location>
</feature>
<feature type="short sequence motif" description="'HIGH' region">
    <location>
        <begin position="40"/>
        <end position="50"/>
    </location>
</feature>
<feature type="short sequence motif" description="'KMSKS' region">
    <location>
        <begin position="579"/>
        <end position="583"/>
    </location>
</feature>
<feature type="binding site" evidence="1">
    <location>
        <position position="582"/>
    </location>
    <ligand>
        <name>ATP</name>
        <dbReference type="ChEBI" id="CHEBI:30616"/>
    </ligand>
</feature>
<protein>
    <recommendedName>
        <fullName evidence="1">Leucine--tRNA ligase</fullName>
        <ecNumber evidence="1">6.1.1.4</ecNumber>
    </recommendedName>
    <alternativeName>
        <fullName evidence="1">Leucyl-tRNA synthetase</fullName>
        <shortName evidence="1">LeuRS</shortName>
    </alternativeName>
</protein>
<evidence type="ECO:0000255" key="1">
    <source>
        <dbReference type="HAMAP-Rule" id="MF_00049"/>
    </source>
</evidence>
<comment type="catalytic activity">
    <reaction evidence="1">
        <text>tRNA(Leu) + L-leucine + ATP = L-leucyl-tRNA(Leu) + AMP + diphosphate</text>
        <dbReference type="Rhea" id="RHEA:11688"/>
        <dbReference type="Rhea" id="RHEA-COMP:9613"/>
        <dbReference type="Rhea" id="RHEA-COMP:9622"/>
        <dbReference type="ChEBI" id="CHEBI:30616"/>
        <dbReference type="ChEBI" id="CHEBI:33019"/>
        <dbReference type="ChEBI" id="CHEBI:57427"/>
        <dbReference type="ChEBI" id="CHEBI:78442"/>
        <dbReference type="ChEBI" id="CHEBI:78494"/>
        <dbReference type="ChEBI" id="CHEBI:456215"/>
        <dbReference type="EC" id="6.1.1.4"/>
    </reaction>
</comment>
<comment type="subcellular location">
    <subcellularLocation>
        <location evidence="1">Cytoplasm</location>
    </subcellularLocation>
</comment>
<comment type="similarity">
    <text evidence="1">Belongs to the class-I aminoacyl-tRNA synthetase family.</text>
</comment>
<gene>
    <name evidence="1" type="primary">leuS</name>
    <name type="ordered locus">CFF8240_0731</name>
</gene>
<organism>
    <name type="scientific">Campylobacter fetus subsp. fetus (strain 82-40)</name>
    <dbReference type="NCBI Taxonomy" id="360106"/>
    <lineage>
        <taxon>Bacteria</taxon>
        <taxon>Pseudomonadati</taxon>
        <taxon>Campylobacterota</taxon>
        <taxon>Epsilonproteobacteria</taxon>
        <taxon>Campylobacterales</taxon>
        <taxon>Campylobacteraceae</taxon>
        <taxon>Campylobacter</taxon>
    </lineage>
</organism>
<accession>A0RNX3</accession>
<name>SYL_CAMFF</name>
<sequence length="811" mass="93325">MEYNAKNIEYKWQQIWKKNGYSEPKDDYSLPKKYILSMFPYPSGRLHMGHVRNYSIGDALSRYYRNRGYNVLQPIGFDSFGMPAENAAIKHKIHPKIWTYDNIDYMTKELDALGFSFSKKRLFATSDPLYTRWEQEFFIRMYEKGLVYRKSAVVNWCENDQTVLANEQVEDGKCWRCGHEVIQKEMPGYYLKITDYANELLECLKDLEGKWPNQVLTMQENWIGKSYGLEFEFKFDSSSKILLDGMDGFKVFTTRPDTIYGVSYAAIAPEHIVVKKLLEKNILDDATSAKLKFILNQSPKQRQSIDKDGVSLGLNVIHPLTNELIPVWCANFVLAEYGGGAVMSVPAHDERDFEFASKFNLNIKQIIKSDTLPYCEKSGVYINSELINGLAYEEAREKIISKFEKEGWGNRVTNYKLRDWGISRQRYWGAPIPMIHCKKCGVVPENISNLPVKLPDDVVITGEGNPLDKHSEFKNCKCPKCGSQATRETDTMDTFFESSWYFARFASDEKTWEDVAFDKKSVDYWMSVDQYIGGIEHAILHLLYARFFQKALRDLGYLRDCEPFDSLLTQGMVLKDGSKMSKSKGNTVDPDDIINKFGADTARLFILFAAPPQKELEWNDSAVEGAFKFINRLYDRSDNAYKTEILPQINHSNLNKDEKYARLKVYEALKKSTDVFENSFAFNTLIAACMEALNGLNAQNNKDIWTEGYFIILNLLEPIIPHACHELSNELFGLKNFTKLSLKDEVFVKDSLNLAITVNGKRRSEIEVSAFESDDKILEIAKQEVSKWIEGKEILKEIYVPNKLVNLVIKG</sequence>